<accession>A8GYX2</accession>
<gene>
    <name evidence="1" type="primary">rpsG</name>
    <name type="ordered locus">Spea_0180</name>
</gene>
<organism>
    <name type="scientific">Shewanella pealeana (strain ATCC 700345 / ANG-SQ1)</name>
    <dbReference type="NCBI Taxonomy" id="398579"/>
    <lineage>
        <taxon>Bacteria</taxon>
        <taxon>Pseudomonadati</taxon>
        <taxon>Pseudomonadota</taxon>
        <taxon>Gammaproteobacteria</taxon>
        <taxon>Alteromonadales</taxon>
        <taxon>Shewanellaceae</taxon>
        <taxon>Shewanella</taxon>
    </lineage>
</organism>
<comment type="function">
    <text evidence="1">One of the primary rRNA binding proteins, it binds directly to 16S rRNA where it nucleates assembly of the head domain of the 30S subunit. Is located at the subunit interface close to the decoding center, probably blocks exit of the E-site tRNA.</text>
</comment>
<comment type="subunit">
    <text evidence="1">Part of the 30S ribosomal subunit. Contacts proteins S9 and S11.</text>
</comment>
<comment type="similarity">
    <text evidence="1">Belongs to the universal ribosomal protein uS7 family.</text>
</comment>
<name>RS7_SHEPA</name>
<dbReference type="EMBL" id="CP000851">
    <property type="protein sequence ID" value="ABV85509.1"/>
    <property type="molecule type" value="Genomic_DNA"/>
</dbReference>
<dbReference type="RefSeq" id="WP_012153455.1">
    <property type="nucleotide sequence ID" value="NC_009901.1"/>
</dbReference>
<dbReference type="SMR" id="A8GYX2"/>
<dbReference type="STRING" id="398579.Spea_0180"/>
<dbReference type="KEGG" id="spl:Spea_0180"/>
<dbReference type="eggNOG" id="COG0049">
    <property type="taxonomic scope" value="Bacteria"/>
</dbReference>
<dbReference type="HOGENOM" id="CLU_072226_1_1_6"/>
<dbReference type="OrthoDB" id="9807653at2"/>
<dbReference type="Proteomes" id="UP000002608">
    <property type="component" value="Chromosome"/>
</dbReference>
<dbReference type="GO" id="GO:0015935">
    <property type="term" value="C:small ribosomal subunit"/>
    <property type="evidence" value="ECO:0007669"/>
    <property type="project" value="InterPro"/>
</dbReference>
<dbReference type="GO" id="GO:0019843">
    <property type="term" value="F:rRNA binding"/>
    <property type="evidence" value="ECO:0007669"/>
    <property type="project" value="UniProtKB-UniRule"/>
</dbReference>
<dbReference type="GO" id="GO:0003735">
    <property type="term" value="F:structural constituent of ribosome"/>
    <property type="evidence" value="ECO:0007669"/>
    <property type="project" value="InterPro"/>
</dbReference>
<dbReference type="GO" id="GO:0000049">
    <property type="term" value="F:tRNA binding"/>
    <property type="evidence" value="ECO:0007669"/>
    <property type="project" value="UniProtKB-UniRule"/>
</dbReference>
<dbReference type="GO" id="GO:0006412">
    <property type="term" value="P:translation"/>
    <property type="evidence" value="ECO:0007669"/>
    <property type="project" value="UniProtKB-UniRule"/>
</dbReference>
<dbReference type="CDD" id="cd14869">
    <property type="entry name" value="uS7_Bacteria"/>
    <property type="match status" value="1"/>
</dbReference>
<dbReference type="FunFam" id="1.10.455.10:FF:000001">
    <property type="entry name" value="30S ribosomal protein S7"/>
    <property type="match status" value="1"/>
</dbReference>
<dbReference type="Gene3D" id="1.10.455.10">
    <property type="entry name" value="Ribosomal protein S7 domain"/>
    <property type="match status" value="1"/>
</dbReference>
<dbReference type="HAMAP" id="MF_00480_B">
    <property type="entry name" value="Ribosomal_uS7_B"/>
    <property type="match status" value="1"/>
</dbReference>
<dbReference type="InterPro" id="IPR000235">
    <property type="entry name" value="Ribosomal_uS7"/>
</dbReference>
<dbReference type="InterPro" id="IPR005717">
    <property type="entry name" value="Ribosomal_uS7_bac/org-type"/>
</dbReference>
<dbReference type="InterPro" id="IPR020606">
    <property type="entry name" value="Ribosomal_uS7_CS"/>
</dbReference>
<dbReference type="InterPro" id="IPR023798">
    <property type="entry name" value="Ribosomal_uS7_dom"/>
</dbReference>
<dbReference type="InterPro" id="IPR036823">
    <property type="entry name" value="Ribosomal_uS7_dom_sf"/>
</dbReference>
<dbReference type="NCBIfam" id="TIGR01029">
    <property type="entry name" value="rpsG_bact"/>
    <property type="match status" value="1"/>
</dbReference>
<dbReference type="PANTHER" id="PTHR11205">
    <property type="entry name" value="RIBOSOMAL PROTEIN S7"/>
    <property type="match status" value="1"/>
</dbReference>
<dbReference type="Pfam" id="PF00177">
    <property type="entry name" value="Ribosomal_S7"/>
    <property type="match status" value="1"/>
</dbReference>
<dbReference type="PIRSF" id="PIRSF002122">
    <property type="entry name" value="RPS7p_RPS7a_RPS5e_RPS7o"/>
    <property type="match status" value="1"/>
</dbReference>
<dbReference type="SUPFAM" id="SSF47973">
    <property type="entry name" value="Ribosomal protein S7"/>
    <property type="match status" value="1"/>
</dbReference>
<dbReference type="PROSITE" id="PS00052">
    <property type="entry name" value="RIBOSOMAL_S7"/>
    <property type="match status" value="1"/>
</dbReference>
<proteinExistence type="inferred from homology"/>
<keyword id="KW-1185">Reference proteome</keyword>
<keyword id="KW-0687">Ribonucleoprotein</keyword>
<keyword id="KW-0689">Ribosomal protein</keyword>
<keyword id="KW-0694">RNA-binding</keyword>
<keyword id="KW-0699">rRNA-binding</keyword>
<keyword id="KW-0820">tRNA-binding</keyword>
<feature type="chain" id="PRO_1000081304" description="Small ribosomal subunit protein uS7">
    <location>
        <begin position="1"/>
        <end position="156"/>
    </location>
</feature>
<reference key="1">
    <citation type="submission" date="2007-10" db="EMBL/GenBank/DDBJ databases">
        <title>Complete sequence of Shewanella pealeana ATCC 700345.</title>
        <authorList>
            <consortium name="US DOE Joint Genome Institute"/>
            <person name="Copeland A."/>
            <person name="Lucas S."/>
            <person name="Lapidus A."/>
            <person name="Barry K."/>
            <person name="Glavina del Rio T."/>
            <person name="Dalin E."/>
            <person name="Tice H."/>
            <person name="Pitluck S."/>
            <person name="Chertkov O."/>
            <person name="Brettin T."/>
            <person name="Bruce D."/>
            <person name="Detter J.C."/>
            <person name="Han C."/>
            <person name="Schmutz J."/>
            <person name="Larimer F."/>
            <person name="Land M."/>
            <person name="Hauser L."/>
            <person name="Kyrpides N."/>
            <person name="Kim E."/>
            <person name="Zhao J.-S.Z."/>
            <person name="Manno D."/>
            <person name="Hawari J."/>
            <person name="Richardson P."/>
        </authorList>
    </citation>
    <scope>NUCLEOTIDE SEQUENCE [LARGE SCALE GENOMIC DNA]</scope>
    <source>
        <strain>ATCC 700345 / ANG-SQ1</strain>
    </source>
</reference>
<evidence type="ECO:0000255" key="1">
    <source>
        <dbReference type="HAMAP-Rule" id="MF_00480"/>
    </source>
</evidence>
<evidence type="ECO:0000305" key="2"/>
<protein>
    <recommendedName>
        <fullName evidence="1">Small ribosomal subunit protein uS7</fullName>
    </recommendedName>
    <alternativeName>
        <fullName evidence="2">30S ribosomal protein S7</fullName>
    </alternativeName>
</protein>
<sequence>MPRRRVVGQRKILPDPKFKSELLAKFINVIMQDGKKSTAEKIIYKALDTASEKKGEDHLVILEAALDNVRPSVEVKSRRVGGSTYQVPCEVRPVRRNALAMRWLVEAARKRGEKSMALRLAGEMLDASENKGTAVKKREDVHRMAEANKAFAHYRW</sequence>